<proteinExistence type="inferred from homology"/>
<dbReference type="EMBL" id="CR380947">
    <property type="protein sequence ID" value="CAG57760.1"/>
    <property type="molecule type" value="Genomic_DNA"/>
</dbReference>
<dbReference type="RefSeq" id="XP_444867.1">
    <property type="nucleotide sequence ID" value="XM_444867.1"/>
</dbReference>
<dbReference type="FunCoup" id="Q6FY35">
    <property type="interactions" value="135"/>
</dbReference>
<dbReference type="STRING" id="284593.Q6FY35"/>
<dbReference type="EnsemblFungi" id="CAGL0A02365g-T">
    <property type="protein sequence ID" value="CAGL0A02365g-T-p1"/>
    <property type="gene ID" value="CAGL0A02365g"/>
</dbReference>
<dbReference type="KEGG" id="cgr:2886358"/>
<dbReference type="CGD" id="CAL0126699">
    <property type="gene designation" value="CAGL0A02365g"/>
</dbReference>
<dbReference type="VEuPathDB" id="FungiDB:CAGL0A02365g"/>
<dbReference type="eggNOG" id="ENOG502QQY3">
    <property type="taxonomic scope" value="Eukaryota"/>
</dbReference>
<dbReference type="HOGENOM" id="CLU_030205_3_1_1"/>
<dbReference type="InParanoid" id="Q6FY35"/>
<dbReference type="OMA" id="AFWPRCV"/>
<dbReference type="Proteomes" id="UP000002428">
    <property type="component" value="Chromosome A"/>
</dbReference>
<dbReference type="GO" id="GO:0033106">
    <property type="term" value="C:cis-Golgi network membrane"/>
    <property type="evidence" value="ECO:0000250"/>
    <property type="project" value="UniProtKB"/>
</dbReference>
<dbReference type="GO" id="GO:0005737">
    <property type="term" value="C:cytoplasm"/>
    <property type="evidence" value="ECO:0000250"/>
    <property type="project" value="UniProtKB"/>
</dbReference>
<dbReference type="GO" id="GO:0005789">
    <property type="term" value="C:endoplasmic reticulum membrane"/>
    <property type="evidence" value="ECO:0007669"/>
    <property type="project" value="UniProtKB-SubCell"/>
</dbReference>
<dbReference type="GO" id="GO:0005634">
    <property type="term" value="C:nucleus"/>
    <property type="evidence" value="ECO:0007669"/>
    <property type="project" value="UniProtKB-SubCell"/>
</dbReference>
<dbReference type="GO" id="GO:0097001">
    <property type="term" value="F:ceramide binding"/>
    <property type="evidence" value="ECO:0000250"/>
    <property type="project" value="UniProtKB"/>
</dbReference>
<dbReference type="GO" id="GO:0035621">
    <property type="term" value="P:ER to Golgi ceramide transport"/>
    <property type="evidence" value="ECO:0000250"/>
    <property type="project" value="UniProtKB"/>
</dbReference>
<dbReference type="GO" id="GO:0006979">
    <property type="term" value="P:response to oxidative stress"/>
    <property type="evidence" value="ECO:0007669"/>
    <property type="project" value="InterPro"/>
</dbReference>
<dbReference type="InterPro" id="IPR051385">
    <property type="entry name" value="Ceramide-binding_SVF1"/>
</dbReference>
<dbReference type="InterPro" id="IPR033394">
    <property type="entry name" value="Svf1-like_C"/>
</dbReference>
<dbReference type="InterPro" id="IPR013931">
    <property type="entry name" value="Svf1-like_N"/>
</dbReference>
<dbReference type="PANTHER" id="PTHR47107:SF1">
    <property type="entry name" value="CERAMIDE-BINDING PROTEIN SVF1-RELATED"/>
    <property type="match status" value="1"/>
</dbReference>
<dbReference type="PANTHER" id="PTHR47107">
    <property type="entry name" value="SVF1-LIKE PROTEIN YDR222W-RELATED"/>
    <property type="match status" value="1"/>
</dbReference>
<dbReference type="Pfam" id="PF08622">
    <property type="entry name" value="Svf1"/>
    <property type="match status" value="1"/>
</dbReference>
<dbReference type="Pfam" id="PF17187">
    <property type="entry name" value="Svf1_C"/>
    <property type="match status" value="1"/>
</dbReference>
<reference key="1">
    <citation type="journal article" date="2004" name="Nature">
        <title>Genome evolution in yeasts.</title>
        <authorList>
            <person name="Dujon B."/>
            <person name="Sherman D."/>
            <person name="Fischer G."/>
            <person name="Durrens P."/>
            <person name="Casaregola S."/>
            <person name="Lafontaine I."/>
            <person name="de Montigny J."/>
            <person name="Marck C."/>
            <person name="Neuveglise C."/>
            <person name="Talla E."/>
            <person name="Goffard N."/>
            <person name="Frangeul L."/>
            <person name="Aigle M."/>
            <person name="Anthouard V."/>
            <person name="Babour A."/>
            <person name="Barbe V."/>
            <person name="Barnay S."/>
            <person name="Blanchin S."/>
            <person name="Beckerich J.-M."/>
            <person name="Beyne E."/>
            <person name="Bleykasten C."/>
            <person name="Boisrame A."/>
            <person name="Boyer J."/>
            <person name="Cattolico L."/>
            <person name="Confanioleri F."/>
            <person name="de Daruvar A."/>
            <person name="Despons L."/>
            <person name="Fabre E."/>
            <person name="Fairhead C."/>
            <person name="Ferry-Dumazet H."/>
            <person name="Groppi A."/>
            <person name="Hantraye F."/>
            <person name="Hennequin C."/>
            <person name="Jauniaux N."/>
            <person name="Joyet P."/>
            <person name="Kachouri R."/>
            <person name="Kerrest A."/>
            <person name="Koszul R."/>
            <person name="Lemaire M."/>
            <person name="Lesur I."/>
            <person name="Ma L."/>
            <person name="Muller H."/>
            <person name="Nicaud J.-M."/>
            <person name="Nikolski M."/>
            <person name="Oztas S."/>
            <person name="Ozier-Kalogeropoulos O."/>
            <person name="Pellenz S."/>
            <person name="Potier S."/>
            <person name="Richard G.-F."/>
            <person name="Straub M.-L."/>
            <person name="Suleau A."/>
            <person name="Swennen D."/>
            <person name="Tekaia F."/>
            <person name="Wesolowski-Louvel M."/>
            <person name="Westhof E."/>
            <person name="Wirth B."/>
            <person name="Zeniou-Meyer M."/>
            <person name="Zivanovic Y."/>
            <person name="Bolotin-Fukuhara M."/>
            <person name="Thierry A."/>
            <person name="Bouchier C."/>
            <person name="Caudron B."/>
            <person name="Scarpelli C."/>
            <person name="Gaillardin C."/>
            <person name="Weissenbach J."/>
            <person name="Wincker P."/>
            <person name="Souciet J.-L."/>
        </authorList>
    </citation>
    <scope>NUCLEOTIDE SEQUENCE [LARGE SCALE GENOMIC DNA]</scope>
    <source>
        <strain>ATCC 2001 / BCRC 20586 / JCM 3761 / NBRC 0622 / NRRL Y-65 / CBS 138</strain>
    </source>
</reference>
<evidence type="ECO:0000250" key="1">
    <source>
        <dbReference type="UniProtKB" id="Q05515"/>
    </source>
</evidence>
<evidence type="ECO:0000256" key="2">
    <source>
        <dbReference type="SAM" id="MobiDB-lite"/>
    </source>
</evidence>
<evidence type="ECO:0000305" key="3"/>
<name>SVF1_CANGA</name>
<organism>
    <name type="scientific">Candida glabrata (strain ATCC 2001 / BCRC 20586 / JCM 3761 / NBRC 0622 / NRRL Y-65 / CBS 138)</name>
    <name type="common">Yeast</name>
    <name type="synonym">Nakaseomyces glabratus</name>
    <dbReference type="NCBI Taxonomy" id="284593"/>
    <lineage>
        <taxon>Eukaryota</taxon>
        <taxon>Fungi</taxon>
        <taxon>Dikarya</taxon>
        <taxon>Ascomycota</taxon>
        <taxon>Saccharomycotina</taxon>
        <taxon>Saccharomycetes</taxon>
        <taxon>Saccharomycetales</taxon>
        <taxon>Saccharomycetaceae</taxon>
        <taxon>Nakaseomyces</taxon>
    </lineage>
</organism>
<keyword id="KW-0963">Cytoplasm</keyword>
<keyword id="KW-0256">Endoplasmic reticulum</keyword>
<keyword id="KW-0333">Golgi apparatus</keyword>
<keyword id="KW-0445">Lipid transport</keyword>
<keyword id="KW-0472">Membrane</keyword>
<keyword id="KW-0539">Nucleus</keyword>
<keyword id="KW-1185">Reference proteome</keyword>
<keyword id="KW-0813">Transport</keyword>
<sequence>MLKWIQGGLSAVTGIAEPEYGKEYIHTVTERVEGKQPYRETTREDFFWKSPDHTNVETVTFYFSNLATGVVGFAQIIHSNIIGLHTAAQFTFRIFDSKNPEKLNLWTSTKLENFRIEDANFYADDLSVELNADNTQYRLISKVNEQSIVDLTVTRLTPGAKLGDDPSTYYGDNVEQPWGSMRHVFWPRNTCVGEIKVKIPKETAEKTAEEQAQEKEQQEEQEQEGEDEAVEETIEYEERTLKFGEDDPSYCMFVMAFQGMKPHHAAKAWNFMFFHSKENTMVLMEFTTPKSYSNTKVSIGIITNDKEILAVTHDNSALHLNQEIDSVGWNVPKQIRVELKGHKSSAKDEDVEADNDEHKIKAVVEGPLENMVERIDVMGEVPNFVKNIVSGVAGTKPYIYQFGDAENFHFQLDDGEKKNGLAWVEVTFISESEVVTEESYNEE</sequence>
<accession>Q6FY35</accession>
<protein>
    <recommendedName>
        <fullName evidence="3">Ceramide-binding protein SVF1</fullName>
    </recommendedName>
    <alternativeName>
        <fullName>Survival factor 1</fullName>
    </alternativeName>
</protein>
<gene>
    <name type="primary">SVF1</name>
    <name type="ordered locus">CAGL0A02365g</name>
</gene>
<feature type="chain" id="PRO_0000072328" description="Ceramide-binding protein SVF1">
    <location>
        <begin position="1"/>
        <end position="443"/>
    </location>
</feature>
<feature type="region of interest" description="Peripherally associates with membranes" evidence="1">
    <location>
        <begin position="1"/>
        <end position="18"/>
    </location>
</feature>
<feature type="region of interest" description="Disordered" evidence="2">
    <location>
        <begin position="203"/>
        <end position="231"/>
    </location>
</feature>
<feature type="compositionally biased region" description="Basic and acidic residues" evidence="2">
    <location>
        <begin position="203"/>
        <end position="218"/>
    </location>
</feature>
<feature type="compositionally biased region" description="Acidic residues" evidence="2">
    <location>
        <begin position="219"/>
        <end position="231"/>
    </location>
</feature>
<comment type="function">
    <text evidence="1">Ceramide-binding protein that may transfer ceramides from the endoplasmic reticulum membrane to the cis-Golgi network membrane, and is thereby required for the biosynthesis of complex sphingolipids.</text>
</comment>
<comment type="subcellular location">
    <subcellularLocation>
        <location evidence="1">Golgi apparatus</location>
        <location evidence="1">cis-Golgi network membrane</location>
        <topology evidence="1">Peripheral membrane protein</topology>
    </subcellularLocation>
    <subcellularLocation>
        <location evidence="1">Endoplasmic reticulum membrane</location>
        <topology evidence="1">Peripheral membrane protein</topology>
    </subcellularLocation>
    <subcellularLocation>
        <location evidence="1">Cytoplasm</location>
    </subcellularLocation>
    <subcellularLocation>
        <location evidence="1">Nucleus</location>
    </subcellularLocation>
    <text evidence="1">Localizes to the interface between the cis-Golgi network and endoplasmic reticulum exit sites.</text>
</comment>
<comment type="similarity">
    <text evidence="3">Belongs to the SVF1 family.</text>
</comment>